<accession>Q8UAW0</accession>
<proteinExistence type="inferred from homology"/>
<name>UXUA1_AGRFC</name>
<organism>
    <name type="scientific">Agrobacterium fabrum (strain C58 / ATCC 33970)</name>
    <name type="common">Agrobacterium tumefaciens (strain C58)</name>
    <dbReference type="NCBI Taxonomy" id="176299"/>
    <lineage>
        <taxon>Bacteria</taxon>
        <taxon>Pseudomonadati</taxon>
        <taxon>Pseudomonadota</taxon>
        <taxon>Alphaproteobacteria</taxon>
        <taxon>Hyphomicrobiales</taxon>
        <taxon>Rhizobiaceae</taxon>
        <taxon>Rhizobium/Agrobacterium group</taxon>
        <taxon>Agrobacterium</taxon>
        <taxon>Agrobacterium tumefaciens complex</taxon>
    </lineage>
</organism>
<reference key="1">
    <citation type="journal article" date="2001" name="Science">
        <title>The genome of the natural genetic engineer Agrobacterium tumefaciens C58.</title>
        <authorList>
            <person name="Wood D.W."/>
            <person name="Setubal J.C."/>
            <person name="Kaul R."/>
            <person name="Monks D.E."/>
            <person name="Kitajima J.P."/>
            <person name="Okura V.K."/>
            <person name="Zhou Y."/>
            <person name="Chen L."/>
            <person name="Wood G.E."/>
            <person name="Almeida N.F. Jr."/>
            <person name="Woo L."/>
            <person name="Chen Y."/>
            <person name="Paulsen I.T."/>
            <person name="Eisen J.A."/>
            <person name="Karp P.D."/>
            <person name="Bovee D. Sr."/>
            <person name="Chapman P."/>
            <person name="Clendenning J."/>
            <person name="Deatherage G."/>
            <person name="Gillet W."/>
            <person name="Grant C."/>
            <person name="Kutyavin T."/>
            <person name="Levy R."/>
            <person name="Li M.-J."/>
            <person name="McClelland E."/>
            <person name="Palmieri A."/>
            <person name="Raymond C."/>
            <person name="Rouse G."/>
            <person name="Saenphimmachak C."/>
            <person name="Wu Z."/>
            <person name="Romero P."/>
            <person name="Gordon D."/>
            <person name="Zhang S."/>
            <person name="Yoo H."/>
            <person name="Tao Y."/>
            <person name="Biddle P."/>
            <person name="Jung M."/>
            <person name="Krespan W."/>
            <person name="Perry M."/>
            <person name="Gordon-Kamm B."/>
            <person name="Liao L."/>
            <person name="Kim S."/>
            <person name="Hendrick C."/>
            <person name="Zhao Z.-Y."/>
            <person name="Dolan M."/>
            <person name="Chumley F."/>
            <person name="Tingey S.V."/>
            <person name="Tomb J.-F."/>
            <person name="Gordon M.P."/>
            <person name="Olson M.V."/>
            <person name="Nester E.W."/>
        </authorList>
    </citation>
    <scope>NUCLEOTIDE SEQUENCE [LARGE SCALE GENOMIC DNA]</scope>
    <source>
        <strain>C58 / ATCC 33970</strain>
    </source>
</reference>
<reference key="2">
    <citation type="journal article" date="2001" name="Science">
        <title>Genome sequence of the plant pathogen and biotechnology agent Agrobacterium tumefaciens C58.</title>
        <authorList>
            <person name="Goodner B."/>
            <person name="Hinkle G."/>
            <person name="Gattung S."/>
            <person name="Miller N."/>
            <person name="Blanchard M."/>
            <person name="Qurollo B."/>
            <person name="Goldman B.S."/>
            <person name="Cao Y."/>
            <person name="Askenazi M."/>
            <person name="Halling C."/>
            <person name="Mullin L."/>
            <person name="Houmiel K."/>
            <person name="Gordon J."/>
            <person name="Vaudin M."/>
            <person name="Iartchouk O."/>
            <person name="Epp A."/>
            <person name="Liu F."/>
            <person name="Wollam C."/>
            <person name="Allinger M."/>
            <person name="Doughty D."/>
            <person name="Scott C."/>
            <person name="Lappas C."/>
            <person name="Markelz B."/>
            <person name="Flanagan C."/>
            <person name="Crowell C."/>
            <person name="Gurson J."/>
            <person name="Lomo C."/>
            <person name="Sear C."/>
            <person name="Strub G."/>
            <person name="Cielo C."/>
            <person name="Slater S."/>
        </authorList>
    </citation>
    <scope>NUCLEOTIDE SEQUENCE [LARGE SCALE GENOMIC DNA]</scope>
    <source>
        <strain>C58 / ATCC 33970</strain>
    </source>
</reference>
<sequence>MRHTWRWFGPVDKVTVQDAAQAGAEGIVSALHHITTGDVWPVDEITKRHEAIKAGGLYWDVVESVPVSEDIKTQTGDWKNHIANWQETLRRLSASGIRTVCYNFMPVLDWTRTDLRWETRHGARAMRFDLTDFAAFDIHILKRPDAKADYPDWLLEEAAKRFAEMPDTKIAALGRNIGAGLPGSADGYTLAQLLEKLRSYHGINRGRLQQNLIDFLSEVTPVAEEVGINICAHGDDPPWPLLGLPRILSTEADYAHMLSQVDSRANGVTLCTGSLGARADNDLPFIAGRFADRIHFVHLRNVTRDTDTVPCSFFEDEHLEGGTDMVAVIAALITEEARRRAEGRDDHTIPMRPDHGQEILDDLTRGAQPGYPAIGRLKGLAELRGIERTLSHGRFGLATGKG</sequence>
<feature type="chain" id="PRO_0000170658" description="Mannonate dehydratase 1">
    <location>
        <begin position="1"/>
        <end position="402"/>
    </location>
</feature>
<protein>
    <recommendedName>
        <fullName>Mannonate dehydratase 1</fullName>
        <ecNumber>4.2.1.8</ecNumber>
    </recommendedName>
    <alternativeName>
        <fullName>D-mannonate hydro-lyase 1</fullName>
    </alternativeName>
</protein>
<comment type="function">
    <text evidence="1">Catalyzes the dehydration of D-mannonate.</text>
</comment>
<comment type="catalytic activity">
    <reaction>
        <text>D-mannonate = 2-dehydro-3-deoxy-D-gluconate + H2O</text>
        <dbReference type="Rhea" id="RHEA:20097"/>
        <dbReference type="ChEBI" id="CHEBI:15377"/>
        <dbReference type="ChEBI" id="CHEBI:17767"/>
        <dbReference type="ChEBI" id="CHEBI:57990"/>
        <dbReference type="EC" id="4.2.1.8"/>
    </reaction>
</comment>
<comment type="cofactor">
    <cofactor evidence="1">
        <name>Fe(2+)</name>
        <dbReference type="ChEBI" id="CHEBI:29033"/>
    </cofactor>
    <cofactor evidence="1">
        <name>Mn(2+)</name>
        <dbReference type="ChEBI" id="CHEBI:29035"/>
    </cofactor>
</comment>
<comment type="pathway">
    <text>Carbohydrate metabolism; pentose and glucuronate interconversion.</text>
</comment>
<comment type="similarity">
    <text evidence="2">Belongs to the mannonate dehydratase family.</text>
</comment>
<keyword id="KW-0408">Iron</keyword>
<keyword id="KW-0456">Lyase</keyword>
<keyword id="KW-0464">Manganese</keyword>
<keyword id="KW-1185">Reference proteome</keyword>
<evidence type="ECO:0000250" key="1"/>
<evidence type="ECO:0000305" key="2"/>
<dbReference type="EC" id="4.2.1.8"/>
<dbReference type="EMBL" id="AE007870">
    <property type="protein sequence ID" value="AAK90133.1"/>
    <property type="molecule type" value="Genomic_DNA"/>
</dbReference>
<dbReference type="PIR" id="AC2957">
    <property type="entry name" value="AC2957"/>
</dbReference>
<dbReference type="PIR" id="C98326">
    <property type="entry name" value="C98326"/>
</dbReference>
<dbReference type="RefSeq" id="NP_357348.1">
    <property type="nucleotide sequence ID" value="NC_003063.2"/>
</dbReference>
<dbReference type="RefSeq" id="WP_010972887.1">
    <property type="nucleotide sequence ID" value="NC_003063.2"/>
</dbReference>
<dbReference type="SMR" id="Q8UAW0"/>
<dbReference type="STRING" id="176299.Atu3257"/>
<dbReference type="EnsemblBacteria" id="AAK90133">
    <property type="protein sequence ID" value="AAK90133"/>
    <property type="gene ID" value="Atu3257"/>
</dbReference>
<dbReference type="GeneID" id="1135131"/>
<dbReference type="KEGG" id="atu:Atu3257"/>
<dbReference type="PATRIC" id="fig|176299.10.peg.3099"/>
<dbReference type="eggNOG" id="COG1312">
    <property type="taxonomic scope" value="Bacteria"/>
</dbReference>
<dbReference type="HOGENOM" id="CLU_058621_2_0_5"/>
<dbReference type="OrthoDB" id="9780250at2"/>
<dbReference type="PhylomeDB" id="Q8UAW0"/>
<dbReference type="BioCyc" id="AGRO:ATU3257-MONOMER"/>
<dbReference type="UniPathway" id="UPA00246"/>
<dbReference type="Proteomes" id="UP000000813">
    <property type="component" value="Chromosome linear"/>
</dbReference>
<dbReference type="GO" id="GO:0008198">
    <property type="term" value="F:ferrous iron binding"/>
    <property type="evidence" value="ECO:0007669"/>
    <property type="project" value="TreeGrafter"/>
</dbReference>
<dbReference type="GO" id="GO:0030145">
    <property type="term" value="F:manganese ion binding"/>
    <property type="evidence" value="ECO:0007669"/>
    <property type="project" value="TreeGrafter"/>
</dbReference>
<dbReference type="GO" id="GO:0008927">
    <property type="term" value="F:mannonate dehydratase activity"/>
    <property type="evidence" value="ECO:0007669"/>
    <property type="project" value="UniProtKB-UniRule"/>
</dbReference>
<dbReference type="GO" id="GO:0042840">
    <property type="term" value="P:D-glucuronate catabolic process"/>
    <property type="evidence" value="ECO:0007669"/>
    <property type="project" value="TreeGrafter"/>
</dbReference>
<dbReference type="Gene3D" id="3.20.20.150">
    <property type="entry name" value="Divalent-metal-dependent TIM barrel enzymes"/>
    <property type="match status" value="1"/>
</dbReference>
<dbReference type="HAMAP" id="MF_00106">
    <property type="entry name" value="UxuA"/>
    <property type="match status" value="1"/>
</dbReference>
<dbReference type="InterPro" id="IPR004628">
    <property type="entry name" value="Man_deHydtase"/>
</dbReference>
<dbReference type="InterPro" id="IPR036237">
    <property type="entry name" value="Xyl_isomerase-like_sf"/>
</dbReference>
<dbReference type="NCBIfam" id="NF003027">
    <property type="entry name" value="PRK03906.1"/>
    <property type="match status" value="1"/>
</dbReference>
<dbReference type="NCBIfam" id="TIGR00695">
    <property type="entry name" value="uxuA"/>
    <property type="match status" value="1"/>
</dbReference>
<dbReference type="PANTHER" id="PTHR30387">
    <property type="entry name" value="MANNONATE DEHYDRATASE"/>
    <property type="match status" value="1"/>
</dbReference>
<dbReference type="PANTHER" id="PTHR30387:SF2">
    <property type="entry name" value="MANNONATE DEHYDRATASE"/>
    <property type="match status" value="1"/>
</dbReference>
<dbReference type="Pfam" id="PF03786">
    <property type="entry name" value="UxuA"/>
    <property type="match status" value="1"/>
</dbReference>
<dbReference type="PIRSF" id="PIRSF016049">
    <property type="entry name" value="Man_dehyd"/>
    <property type="match status" value="1"/>
</dbReference>
<dbReference type="SUPFAM" id="SSF51658">
    <property type="entry name" value="Xylose isomerase-like"/>
    <property type="match status" value="1"/>
</dbReference>
<gene>
    <name type="primary">uxuA1</name>
    <name type="ordered locus">Atu3257</name>
    <name type="ORF">AGR_L_3119</name>
</gene>